<accession>Q9GZN6</accession>
<accession>Q8IYV4</accession>
<accession>Q9Y5I9</accession>
<sequence>MKTEAQPSTSLLANTSWTGTVISDSVPGSQTWEDKGSLTRSATSWTSEAQVSAARVAEAQARTSQPKQISVLEALTASALNQKPTHEKVQMTEKKESEVLLARPFWSSKTEYILAQVGFSMKPSCLWRFAYLWLNSGGCSFAAIYIFMLFLVGVPLLFLEMAAGQSMRQGGMGVWKIIAPWIGGVGYSSFMVCFILGLYFNVVNSWIIFYMSQSFQFPVPWEKCPLTMNSSGFDPECERTTPSIYFWYQQALKASDRIEDGGSPVYSLVLPFFLCWCLVGAFMINGLKSTGKVIYVLVLLPCFIIVGFFIRTLLLEGAKFGLQQLVVAKISDVYNMSVWSLAGGQVLSNTGIGLGSVASLASYMPQSNNCLSDAFLVSVINLLTLLVFTSFNFCVLGFWATVITHRCCERNAEILLKLINLGKLPPDAKPPVNLLYNPTSIYNAWLSGLPQHIKSMVLREVTECNIETQFLKASEGPKFAFLSFVEAMSFLPPSVFWSFIFFLMLLAMGLSSAIGIMQGIITPLQDTFSFFRKHTKLLIVGVFLLMFVCGLFFTRPSGSYFIRLLSDYWIVFPIIVVVVFETMAVSWAYGARRFLADLTILLGHPISPIFGWLWPHLCPVVLLIIFVTMMVHLCMKPITYMSWDSSTSKEVLRPYPPWALLLMITLFAIVILPIPAYFVYCRIHRIPFRPKSGDGPMTASTSLPLSHQLTPSKEVQKEEILQVDETKYPSTCNVTS</sequence>
<proteinExistence type="evidence at protein level"/>
<feature type="chain" id="PRO_0000214801" description="Orphan sodium- and chloride-dependent neurotransmitter transporter NTT5">
    <location>
        <begin position="1"/>
        <end position="736"/>
    </location>
</feature>
<feature type="topological domain" description="Cytoplasmic" evidence="1">
    <location>
        <begin position="1"/>
        <end position="138"/>
    </location>
</feature>
<feature type="transmembrane region" description="Helical; Name=1" evidence="1">
    <location>
        <begin position="139"/>
        <end position="159"/>
    </location>
</feature>
<feature type="transmembrane region" description="Helical; Name=2" evidence="1">
    <location>
        <begin position="177"/>
        <end position="197"/>
    </location>
</feature>
<feature type="transmembrane region" description="Helical; Name=3" evidence="1">
    <location>
        <begin position="199"/>
        <end position="219"/>
    </location>
</feature>
<feature type="topological domain" description="Extracellular" evidence="1">
    <location>
        <begin position="220"/>
        <end position="263"/>
    </location>
</feature>
<feature type="transmembrane region" description="Helical; Name=4" evidence="1">
    <location>
        <begin position="264"/>
        <end position="284"/>
    </location>
</feature>
<feature type="transmembrane region" description="Helical; Name=5" evidence="1">
    <location>
        <begin position="290"/>
        <end position="310"/>
    </location>
</feature>
<feature type="transmembrane region" description="Helical; Name=6" evidence="1">
    <location>
        <begin position="338"/>
        <end position="358"/>
    </location>
</feature>
<feature type="transmembrane region" description="Helical; Name=7" evidence="1">
    <location>
        <begin position="383"/>
        <end position="403"/>
    </location>
</feature>
<feature type="topological domain" description="Extracellular" evidence="1">
    <location>
        <begin position="404"/>
        <end position="495"/>
    </location>
</feature>
<feature type="transmembrane region" description="Helical; Name=8" evidence="1">
    <location>
        <begin position="496"/>
        <end position="516"/>
    </location>
</feature>
<feature type="transmembrane region" description="Helical; Name=9" evidence="1">
    <location>
        <begin position="534"/>
        <end position="554"/>
    </location>
</feature>
<feature type="transmembrane region" description="Helical; Name=10" evidence="1">
    <location>
        <begin position="568"/>
        <end position="588"/>
    </location>
</feature>
<feature type="transmembrane region" description="Helical; Name=11" evidence="1">
    <location>
        <begin position="609"/>
        <end position="629"/>
    </location>
</feature>
<feature type="transmembrane region" description="Helical; Name=12" evidence="1">
    <location>
        <begin position="659"/>
        <end position="679"/>
    </location>
</feature>
<feature type="topological domain" description="Cytoplasmic" evidence="1">
    <location>
        <begin position="680"/>
        <end position="736"/>
    </location>
</feature>
<feature type="glycosylation site" description="N-linked (GlcNAc...) asparagine" evidence="1">
    <location>
        <position position="229"/>
    </location>
</feature>
<feature type="splice variant" id="VSP_056317" description="In isoform 2." evidence="3">
    <original>SKEVLRPYPPWALLLMITLFAIVILPIPAYFVYCRIHRIPFRPKSGDGPMTASTSLPLSHQLTPSKEVQKEEILQVDETKYPSTCNVTS</original>
    <variation>VSLPQDPEPLWE</variation>
    <location>
        <begin position="648"/>
        <end position="736"/>
    </location>
</feature>
<feature type="sequence variant" id="VAR_052067" description="In dbSNP:rs35860981.">
    <original>S</original>
    <variation>R</variation>
    <location>
        <position position="108"/>
    </location>
</feature>
<feature type="sequence variant" id="VAR_064753" description="Found in a renal cell carcinoma sample; somatic mutation." evidence="2">
    <original>E</original>
    <variation>K</variation>
    <location>
        <position position="236"/>
    </location>
</feature>
<feature type="sequence conflict" description="In Ref. 1; AAD38044." evidence="4" ref="1">
    <original>W</original>
    <variation>R</variation>
    <location>
        <position position="181"/>
    </location>
</feature>
<feature type="sequence conflict" description="In Ref. 1; AAD38044." evidence="4" ref="1">
    <original>G</original>
    <variation>GG</variation>
    <location>
        <position position="307"/>
    </location>
</feature>
<keyword id="KW-0025">Alternative splicing</keyword>
<keyword id="KW-0325">Glycoprotein</keyword>
<keyword id="KW-0472">Membrane</keyword>
<keyword id="KW-0532">Neurotransmitter transport</keyword>
<keyword id="KW-1267">Proteomics identification</keyword>
<keyword id="KW-1185">Reference proteome</keyword>
<keyword id="KW-0769">Symport</keyword>
<keyword id="KW-0812">Transmembrane</keyword>
<keyword id="KW-1133">Transmembrane helix</keyword>
<keyword id="KW-0813">Transport</keyword>
<name>S6A16_HUMAN</name>
<evidence type="ECO:0000255" key="1"/>
<evidence type="ECO:0000269" key="2">
    <source>
    </source>
</evidence>
<evidence type="ECO:0000303" key="3">
    <source>
    </source>
</evidence>
<evidence type="ECO:0000305" key="4"/>
<gene>
    <name type="primary">SLC6A16</name>
    <name type="synonym">NTT5</name>
</gene>
<organism>
    <name type="scientific">Homo sapiens</name>
    <name type="common">Human</name>
    <dbReference type="NCBI Taxonomy" id="9606"/>
    <lineage>
        <taxon>Eukaryota</taxon>
        <taxon>Metazoa</taxon>
        <taxon>Chordata</taxon>
        <taxon>Craniata</taxon>
        <taxon>Vertebrata</taxon>
        <taxon>Euteleostomi</taxon>
        <taxon>Mammalia</taxon>
        <taxon>Eutheria</taxon>
        <taxon>Euarchontoglires</taxon>
        <taxon>Primates</taxon>
        <taxon>Haplorrhini</taxon>
        <taxon>Catarrhini</taxon>
        <taxon>Hominidae</taxon>
        <taxon>Homo</taxon>
    </lineage>
</organism>
<dbReference type="EMBL" id="AF151977">
    <property type="protein sequence ID" value="AAD38044.1"/>
    <property type="molecule type" value="mRNA"/>
</dbReference>
<dbReference type="EMBL" id="AF265578">
    <property type="protein sequence ID" value="AAG41362.1"/>
    <property type="molecule type" value="mRNA"/>
</dbReference>
<dbReference type="EMBL" id="AL136856">
    <property type="protein sequence ID" value="CAB66790.1"/>
    <property type="molecule type" value="mRNA"/>
</dbReference>
<dbReference type="EMBL" id="AC011450">
    <property type="status" value="NOT_ANNOTATED_CDS"/>
    <property type="molecule type" value="Genomic_DNA"/>
</dbReference>
<dbReference type="EMBL" id="BC034948">
    <property type="protein sequence ID" value="AAH34948.1"/>
    <property type="molecule type" value="mRNA"/>
</dbReference>
<dbReference type="CCDS" id="CCDS42590.1">
    <molecule id="Q9GZN6-1"/>
</dbReference>
<dbReference type="RefSeq" id="NP_054756.2">
    <molecule id="Q9GZN6-1"/>
    <property type="nucleotide sequence ID" value="NM_014037.3"/>
</dbReference>
<dbReference type="RefSeq" id="XP_005258877.1">
    <molecule id="Q9GZN6-1"/>
    <property type="nucleotide sequence ID" value="XM_005258820.4"/>
</dbReference>
<dbReference type="RefSeq" id="XP_006723231.1">
    <molecule id="Q9GZN6-1"/>
    <property type="nucleotide sequence ID" value="XM_006723168.4"/>
</dbReference>
<dbReference type="RefSeq" id="XP_024307240.1">
    <molecule id="Q9GZN6-1"/>
    <property type="nucleotide sequence ID" value="XM_024451472.2"/>
</dbReference>
<dbReference type="RefSeq" id="XP_054176715.1">
    <molecule id="Q9GZN6-1"/>
    <property type="nucleotide sequence ID" value="XM_054320740.1"/>
</dbReference>
<dbReference type="RefSeq" id="XP_054176716.1">
    <molecule id="Q9GZN6-1"/>
    <property type="nucleotide sequence ID" value="XM_054320741.1"/>
</dbReference>
<dbReference type="RefSeq" id="XP_054176717.1">
    <molecule id="Q9GZN6-1"/>
    <property type="nucleotide sequence ID" value="XM_054320742.1"/>
</dbReference>
<dbReference type="SMR" id="Q9GZN6"/>
<dbReference type="STRING" id="9606.ENSP00000338627"/>
<dbReference type="TCDB" id="2.A.22.6.5">
    <property type="family name" value="the neurotransmitter:sodium symporter (nss) family"/>
</dbReference>
<dbReference type="GlyCosmos" id="Q9GZN6">
    <property type="glycosylation" value="1 site, No reported glycans"/>
</dbReference>
<dbReference type="GlyGen" id="Q9GZN6">
    <property type="glycosylation" value="1 site"/>
</dbReference>
<dbReference type="iPTMnet" id="Q9GZN6"/>
<dbReference type="PhosphoSitePlus" id="Q9GZN6"/>
<dbReference type="BioMuta" id="SLC6A16"/>
<dbReference type="DMDM" id="18202928"/>
<dbReference type="MassIVE" id="Q9GZN6"/>
<dbReference type="PaxDb" id="9606-ENSP00000338627"/>
<dbReference type="PeptideAtlas" id="Q9GZN6"/>
<dbReference type="ProteomicsDB" id="71245"/>
<dbReference type="ProteomicsDB" id="80098">
    <molecule id="Q9GZN6-1"/>
</dbReference>
<dbReference type="Antibodypedia" id="31965">
    <property type="antibodies" value="80 antibodies from 20 providers"/>
</dbReference>
<dbReference type="DNASU" id="28968"/>
<dbReference type="Ensembl" id="ENST00000335875.9">
    <molecule id="Q9GZN6-1"/>
    <property type="protein sequence ID" value="ENSP00000338627.3"/>
    <property type="gene ID" value="ENSG00000063127.16"/>
</dbReference>
<dbReference type="Ensembl" id="ENST00000454748.7">
    <molecule id="Q9GZN6-2"/>
    <property type="protein sequence ID" value="ENSP00000404022.2"/>
    <property type="gene ID" value="ENSG00000063127.16"/>
</dbReference>
<dbReference type="GeneID" id="28968"/>
<dbReference type="KEGG" id="hsa:28968"/>
<dbReference type="MANE-Select" id="ENST00000335875.9">
    <property type="protein sequence ID" value="ENSP00000338627.3"/>
    <property type="RefSeq nucleotide sequence ID" value="NM_014037.3"/>
    <property type="RefSeq protein sequence ID" value="NP_054756.2"/>
</dbReference>
<dbReference type="UCSC" id="uc002pmz.4">
    <molecule id="Q9GZN6-1"/>
    <property type="organism name" value="human"/>
</dbReference>
<dbReference type="AGR" id="HGNC:13622"/>
<dbReference type="CTD" id="28968"/>
<dbReference type="GeneCards" id="SLC6A16"/>
<dbReference type="HGNC" id="HGNC:13622">
    <property type="gene designation" value="SLC6A16"/>
</dbReference>
<dbReference type="HPA" id="ENSG00000063127">
    <property type="expression patterns" value="Tissue enriched (testis)"/>
</dbReference>
<dbReference type="MIM" id="607972">
    <property type="type" value="gene"/>
</dbReference>
<dbReference type="neXtProt" id="NX_Q9GZN6"/>
<dbReference type="OpenTargets" id="ENSG00000063127"/>
<dbReference type="PharmGKB" id="PA37800"/>
<dbReference type="VEuPathDB" id="HostDB:ENSG00000063127"/>
<dbReference type="eggNOG" id="KOG3659">
    <property type="taxonomic scope" value="Eukaryota"/>
</dbReference>
<dbReference type="GeneTree" id="ENSGT00940000163283"/>
<dbReference type="HOGENOM" id="CLU_006855_7_2_1"/>
<dbReference type="InParanoid" id="Q9GZN6"/>
<dbReference type="OMA" id="YEKVQMT"/>
<dbReference type="OrthoDB" id="6581954at2759"/>
<dbReference type="PAN-GO" id="Q9GZN6">
    <property type="GO annotations" value="2 GO annotations based on evolutionary models"/>
</dbReference>
<dbReference type="PhylomeDB" id="Q9GZN6"/>
<dbReference type="TreeFam" id="TF352709"/>
<dbReference type="PathwayCommons" id="Q9GZN6"/>
<dbReference type="BioGRID-ORCS" id="28968">
    <property type="hits" value="14 hits in 1153 CRISPR screens"/>
</dbReference>
<dbReference type="ChiTaRS" id="SLC6A16">
    <property type="organism name" value="human"/>
</dbReference>
<dbReference type="GenomeRNAi" id="28968"/>
<dbReference type="Pharos" id="Q9GZN6">
    <property type="development level" value="Tdark"/>
</dbReference>
<dbReference type="PRO" id="PR:Q9GZN6"/>
<dbReference type="Proteomes" id="UP000005640">
    <property type="component" value="Chromosome 19"/>
</dbReference>
<dbReference type="RNAct" id="Q9GZN6">
    <property type="molecule type" value="protein"/>
</dbReference>
<dbReference type="Bgee" id="ENSG00000063127">
    <property type="expression patterns" value="Expressed in left testis and 108 other cell types or tissues"/>
</dbReference>
<dbReference type="ExpressionAtlas" id="Q9GZN6">
    <property type="expression patterns" value="baseline and differential"/>
</dbReference>
<dbReference type="GO" id="GO:0005886">
    <property type="term" value="C:plasma membrane"/>
    <property type="evidence" value="ECO:0000318"/>
    <property type="project" value="GO_Central"/>
</dbReference>
<dbReference type="GO" id="GO:0005326">
    <property type="term" value="F:neurotransmitter transmembrane transporter activity"/>
    <property type="evidence" value="ECO:0000303"/>
    <property type="project" value="UniProtKB"/>
</dbReference>
<dbReference type="GO" id="GO:0015293">
    <property type="term" value="F:symporter activity"/>
    <property type="evidence" value="ECO:0007669"/>
    <property type="project" value="UniProtKB-KW"/>
</dbReference>
<dbReference type="GO" id="GO:0006865">
    <property type="term" value="P:amino acid transport"/>
    <property type="evidence" value="ECO:0000318"/>
    <property type="project" value="GO_Central"/>
</dbReference>
<dbReference type="GO" id="GO:0006836">
    <property type="term" value="P:neurotransmitter transport"/>
    <property type="evidence" value="ECO:0000303"/>
    <property type="project" value="UniProtKB"/>
</dbReference>
<dbReference type="GO" id="GO:0035725">
    <property type="term" value="P:sodium ion transmembrane transport"/>
    <property type="evidence" value="ECO:0000318"/>
    <property type="project" value="GO_Central"/>
</dbReference>
<dbReference type="CDD" id="cd11502">
    <property type="entry name" value="SLC6sbd_NTT5"/>
    <property type="match status" value="1"/>
</dbReference>
<dbReference type="InterPro" id="IPR000175">
    <property type="entry name" value="Na/ntran_symport"/>
</dbReference>
<dbReference type="InterPro" id="IPR037272">
    <property type="entry name" value="SNS_sf"/>
</dbReference>
<dbReference type="PANTHER" id="PTHR11616:SF327">
    <property type="entry name" value="ORPHAN SODIUM- AND CHLORIDE-DEPENDENT NEUROTRANSMITTER TRANSPORTER NTT5"/>
    <property type="match status" value="1"/>
</dbReference>
<dbReference type="PANTHER" id="PTHR11616">
    <property type="entry name" value="SODIUM/CHLORIDE DEPENDENT TRANSPORTER"/>
    <property type="match status" value="1"/>
</dbReference>
<dbReference type="Pfam" id="PF00209">
    <property type="entry name" value="SNF"/>
    <property type="match status" value="1"/>
</dbReference>
<dbReference type="PRINTS" id="PR00176">
    <property type="entry name" value="NANEUSMPORT"/>
</dbReference>
<dbReference type="SUPFAM" id="SSF161070">
    <property type="entry name" value="SNF-like"/>
    <property type="match status" value="1"/>
</dbReference>
<dbReference type="PROSITE" id="PS00610">
    <property type="entry name" value="NA_NEUROTRAN_SYMP_1"/>
    <property type="match status" value="1"/>
</dbReference>
<dbReference type="PROSITE" id="PS00754">
    <property type="entry name" value="NA_NEUROTRAN_SYMP_2"/>
    <property type="match status" value="1"/>
</dbReference>
<dbReference type="PROSITE" id="PS50267">
    <property type="entry name" value="NA_NEUROTRAN_SYMP_3"/>
    <property type="match status" value="1"/>
</dbReference>
<protein>
    <recommendedName>
        <fullName>Orphan sodium- and chloride-dependent neurotransmitter transporter NTT5</fullName>
    </recommendedName>
    <alternativeName>
        <fullName>Solute carrier family 6 member 16</fullName>
    </alternativeName>
</protein>
<reference key="1">
    <citation type="journal article" date="1998" name="Abstr. - Soc. Neurosci.">
        <title>Cloning of a new member of the neurotransmitter transporter family.</title>
        <authorList>
            <person name="Sloan J.L."/>
            <person name="Mager S."/>
        </authorList>
    </citation>
    <scope>NUCLEOTIDE SEQUENCE [MRNA] (ISOFORM 1)</scope>
    <source>
        <tissue>Testis</tissue>
    </source>
</reference>
<reference key="2">
    <citation type="journal article" date="2000" name="Genomics">
        <title>Cloning and characterization of human NTT5 and v7-3: two orphan transporters of the Na(+)/Cl(-)-dependent neurotransmitter transporter gene family.</title>
        <authorList>
            <person name="Farmer M.K."/>
            <person name="Robbins M.J."/>
            <person name="Medhurst A.D."/>
            <person name="Campbell D.A."/>
            <person name="Ellington K."/>
            <person name="Duckworth M."/>
            <person name="Brown A.M."/>
            <person name="Middlemiss D.N."/>
            <person name="Price G.W."/>
            <person name="Pangalos M.N."/>
        </authorList>
    </citation>
    <scope>NUCLEOTIDE SEQUENCE [MRNA] (ISOFORM 1)</scope>
    <source>
        <tissue>Testis</tissue>
    </source>
</reference>
<reference key="3">
    <citation type="journal article" date="2001" name="Genome Res.">
        <title>Towards a catalog of human genes and proteins: sequencing and analysis of 500 novel complete protein coding human cDNAs.</title>
        <authorList>
            <person name="Wiemann S."/>
            <person name="Weil B."/>
            <person name="Wellenreuther R."/>
            <person name="Gassenhuber J."/>
            <person name="Glassl S."/>
            <person name="Ansorge W."/>
            <person name="Boecher M."/>
            <person name="Bloecker H."/>
            <person name="Bauersachs S."/>
            <person name="Blum H."/>
            <person name="Lauber J."/>
            <person name="Duesterhoeft A."/>
            <person name="Beyer A."/>
            <person name="Koehrer K."/>
            <person name="Strack N."/>
            <person name="Mewes H.-W."/>
            <person name="Ottenwaelder B."/>
            <person name="Obermaier B."/>
            <person name="Tampe J."/>
            <person name="Heubner D."/>
            <person name="Wambutt R."/>
            <person name="Korn B."/>
            <person name="Klein M."/>
            <person name="Poustka A."/>
        </authorList>
    </citation>
    <scope>NUCLEOTIDE SEQUENCE [LARGE SCALE MRNA] (ISOFORM 1)</scope>
    <source>
        <tissue>Testis</tissue>
    </source>
</reference>
<reference key="4">
    <citation type="journal article" date="2004" name="Nature">
        <title>The DNA sequence and biology of human chromosome 19.</title>
        <authorList>
            <person name="Grimwood J."/>
            <person name="Gordon L.A."/>
            <person name="Olsen A.S."/>
            <person name="Terry A."/>
            <person name="Schmutz J."/>
            <person name="Lamerdin J.E."/>
            <person name="Hellsten U."/>
            <person name="Goodstein D."/>
            <person name="Couronne O."/>
            <person name="Tran-Gyamfi M."/>
            <person name="Aerts A."/>
            <person name="Altherr M."/>
            <person name="Ashworth L."/>
            <person name="Bajorek E."/>
            <person name="Black S."/>
            <person name="Branscomb E."/>
            <person name="Caenepeel S."/>
            <person name="Carrano A.V."/>
            <person name="Caoile C."/>
            <person name="Chan Y.M."/>
            <person name="Christensen M."/>
            <person name="Cleland C.A."/>
            <person name="Copeland A."/>
            <person name="Dalin E."/>
            <person name="Dehal P."/>
            <person name="Denys M."/>
            <person name="Detter J.C."/>
            <person name="Escobar J."/>
            <person name="Flowers D."/>
            <person name="Fotopulos D."/>
            <person name="Garcia C."/>
            <person name="Georgescu A.M."/>
            <person name="Glavina T."/>
            <person name="Gomez M."/>
            <person name="Gonzales E."/>
            <person name="Groza M."/>
            <person name="Hammon N."/>
            <person name="Hawkins T."/>
            <person name="Haydu L."/>
            <person name="Ho I."/>
            <person name="Huang W."/>
            <person name="Israni S."/>
            <person name="Jett J."/>
            <person name="Kadner K."/>
            <person name="Kimball H."/>
            <person name="Kobayashi A."/>
            <person name="Larionov V."/>
            <person name="Leem S.-H."/>
            <person name="Lopez F."/>
            <person name="Lou Y."/>
            <person name="Lowry S."/>
            <person name="Malfatti S."/>
            <person name="Martinez D."/>
            <person name="McCready P.M."/>
            <person name="Medina C."/>
            <person name="Morgan J."/>
            <person name="Nelson K."/>
            <person name="Nolan M."/>
            <person name="Ovcharenko I."/>
            <person name="Pitluck S."/>
            <person name="Pollard M."/>
            <person name="Popkie A.P."/>
            <person name="Predki P."/>
            <person name="Quan G."/>
            <person name="Ramirez L."/>
            <person name="Rash S."/>
            <person name="Retterer J."/>
            <person name="Rodriguez A."/>
            <person name="Rogers S."/>
            <person name="Salamov A."/>
            <person name="Salazar A."/>
            <person name="She X."/>
            <person name="Smith D."/>
            <person name="Slezak T."/>
            <person name="Solovyev V."/>
            <person name="Thayer N."/>
            <person name="Tice H."/>
            <person name="Tsai M."/>
            <person name="Ustaszewska A."/>
            <person name="Vo N."/>
            <person name="Wagner M."/>
            <person name="Wheeler J."/>
            <person name="Wu K."/>
            <person name="Xie G."/>
            <person name="Yang J."/>
            <person name="Dubchak I."/>
            <person name="Furey T.S."/>
            <person name="DeJong P."/>
            <person name="Dickson M."/>
            <person name="Gordon D."/>
            <person name="Eichler E.E."/>
            <person name="Pennacchio L.A."/>
            <person name="Richardson P."/>
            <person name="Stubbs L."/>
            <person name="Rokhsar D.S."/>
            <person name="Myers R.M."/>
            <person name="Rubin E.M."/>
            <person name="Lucas S.M."/>
        </authorList>
    </citation>
    <scope>NUCLEOTIDE SEQUENCE [LARGE SCALE GENOMIC DNA]</scope>
</reference>
<reference key="5">
    <citation type="journal article" date="2004" name="Genome Res.">
        <title>The status, quality, and expansion of the NIH full-length cDNA project: the Mammalian Gene Collection (MGC).</title>
        <authorList>
            <consortium name="The MGC Project Team"/>
        </authorList>
    </citation>
    <scope>NUCLEOTIDE SEQUENCE [LARGE SCALE MRNA] (ISOFORM 2)</scope>
    <source>
        <tissue>Testis</tissue>
    </source>
</reference>
<reference key="6">
    <citation type="journal article" date="2011" name="Nature">
        <title>Exome sequencing identifies frequent mutation of the SWI/SNF complex gene PBRM1 in renal carcinoma.</title>
        <authorList>
            <person name="Varela I."/>
            <person name="Tarpey P."/>
            <person name="Raine K."/>
            <person name="Huang D."/>
            <person name="Ong C.K."/>
            <person name="Stephens P."/>
            <person name="Davies H."/>
            <person name="Jones D."/>
            <person name="Lin M.L."/>
            <person name="Teague J."/>
            <person name="Bignell G."/>
            <person name="Butler A."/>
            <person name="Cho J."/>
            <person name="Dalgliesh G.L."/>
            <person name="Galappaththige D."/>
            <person name="Greenman C."/>
            <person name="Hardy C."/>
            <person name="Jia M."/>
            <person name="Latimer C."/>
            <person name="Lau K.W."/>
            <person name="Marshall J."/>
            <person name="McLaren S."/>
            <person name="Menzies A."/>
            <person name="Mudie L."/>
            <person name="Stebbings L."/>
            <person name="Largaespada D.A."/>
            <person name="Wessels L.F.A."/>
            <person name="Richard S."/>
            <person name="Kahnoski R.J."/>
            <person name="Anema J."/>
            <person name="Tuveson D.A."/>
            <person name="Perez-Mancera P.A."/>
            <person name="Mustonen V."/>
            <person name="Fischer A."/>
            <person name="Adams D.J."/>
            <person name="Rust A."/>
            <person name="Chan-On W."/>
            <person name="Subimerb C."/>
            <person name="Dykema K."/>
            <person name="Furge K."/>
            <person name="Campbell P.J."/>
            <person name="Teh B.T."/>
            <person name="Stratton M.R."/>
            <person name="Futreal P.A."/>
        </authorList>
    </citation>
    <scope>VARIANT LYS-236</scope>
</reference>
<comment type="subcellular location">
    <subcellularLocation>
        <location>Membrane</location>
        <topology>Multi-pass membrane protein</topology>
    </subcellularLocation>
</comment>
<comment type="alternative products">
    <event type="alternative splicing"/>
    <isoform>
        <id>Q9GZN6-1</id>
        <name>1</name>
        <sequence type="displayed"/>
    </isoform>
    <isoform>
        <id>Q9GZN6-2</id>
        <name>2</name>
        <sequence type="described" ref="VSP_056317"/>
    </isoform>
</comment>
<comment type="tissue specificity">
    <text>Highly expressed in peripheral tissues, particularly in testis, pancreas, and prostate.</text>
</comment>
<comment type="similarity">
    <text evidence="4">Belongs to the sodium:neurotransmitter symporter (SNF) (TC 2.A.22) family. SLC6A16 subfamily.</text>
</comment>